<name>ORF3_GRVMC</name>
<comment type="function">
    <text evidence="3 5">Protects and provides long-distance movement to viral RNA. Self associates and binds viral RNA and fibrillarin to form filamentous ribonucleoproteins (RNPs) protected from RNase. ORF3 protein actually fulfills functions that are usually provided by capsid protein, which is absent from umbraviruses' genome.</text>
</comment>
<comment type="subunit">
    <text evidence="3 5">Homooligomer. Interacts with host FIB2; this interaction, is required for ORF3 protein transiting through host Cajal body and nucleolus, relocalization of fibrillarin to the cytoplasm, and in presence of viral RNA, leads to the formation of stable RNPs.</text>
</comment>
<comment type="subcellular location">
    <subcellularLocation>
        <location evidence="3">Host cytoplasm</location>
    </subcellularLocation>
    <subcellularLocation>
        <location evidence="4 5">Host nucleus</location>
        <location evidence="4 5">Host nucleolus</location>
    </subcellularLocation>
    <text>Passes through Cajal bodies to the nucleolus and exits back into the cytoplasm (PubMed:17410203). This journey is absolutely required for the formation of viral RNPs particles (PubMed:17410203). In the cytoplasm, forms in large cytoplasmic inclusions (PubMed:12584328).</text>
</comment>
<sequence length="251" mass="26684">MDTTPASRGQWPVGIMSSVINVFASGKSCNSGGAPRSSVRRGHRAGAARDKSRGFDAPPRRPKGGVHPATTSKDPNKDIRGPPAPTPHKKYRGPAIPGEGRSGVHTTRPRRRAGRSGGMDPRQLVAQPQQRWAKTEIPTERRAEIDGLLPSLLNTLDGQIQGDAALLRYCVGAIKRELRRRWESVQPAHHVAASSGKPSPQLFNEAAQNAEDLSGDGKGCAGQSVQQEVLHSGSGVPPVCADCGKPAANKW</sequence>
<accession>Q67684</accession>
<evidence type="ECO:0000255" key="1"/>
<evidence type="ECO:0000256" key="2">
    <source>
        <dbReference type="SAM" id="MobiDB-lite"/>
    </source>
</evidence>
<evidence type="ECO:0000269" key="3">
    <source>
    </source>
</evidence>
<evidence type="ECO:0000269" key="4">
    <source>
    </source>
</evidence>
<evidence type="ECO:0000269" key="5">
    <source>
    </source>
</evidence>
<dbReference type="EMBL" id="Z69910">
    <property type="protein sequence ID" value="CAA93800.1"/>
    <property type="molecule type" value="Genomic_RNA"/>
</dbReference>
<dbReference type="RefSeq" id="NP_619660.1">
    <property type="nucleotide sequence ID" value="NC_003603.1"/>
</dbReference>
<dbReference type="DIP" id="DIP-60960N"/>
<dbReference type="IntAct" id="Q67684">
    <property type="interactions" value="1"/>
</dbReference>
<dbReference type="GeneID" id="940202"/>
<dbReference type="KEGG" id="vg:940202"/>
<dbReference type="Proteomes" id="UP000008927">
    <property type="component" value="Genome"/>
</dbReference>
<dbReference type="GO" id="GO:0030430">
    <property type="term" value="C:host cell cytoplasm"/>
    <property type="evidence" value="ECO:0007669"/>
    <property type="project" value="UniProtKB-SubCell"/>
</dbReference>
<dbReference type="GO" id="GO:0044196">
    <property type="term" value="C:host cell nucleolus"/>
    <property type="evidence" value="ECO:0007669"/>
    <property type="project" value="UniProtKB-SubCell"/>
</dbReference>
<dbReference type="GO" id="GO:1990904">
    <property type="term" value="C:ribonucleoprotein complex"/>
    <property type="evidence" value="ECO:0007669"/>
    <property type="project" value="UniProtKB-KW"/>
</dbReference>
<dbReference type="GO" id="GO:0003723">
    <property type="term" value="F:RNA binding"/>
    <property type="evidence" value="ECO:0007669"/>
    <property type="project" value="UniProtKB-KW"/>
</dbReference>
<dbReference type="GO" id="GO:0046740">
    <property type="term" value="P:transport of virus in host, cell to cell"/>
    <property type="evidence" value="ECO:0007669"/>
    <property type="project" value="UniProtKB-KW"/>
</dbReference>
<dbReference type="InterPro" id="IPR006902">
    <property type="entry name" value="Umbravirus_LDM"/>
</dbReference>
<dbReference type="Pfam" id="PF04817">
    <property type="entry name" value="Umbravirus_LDM"/>
    <property type="match status" value="1"/>
</dbReference>
<protein>
    <recommendedName>
        <fullName>Long-distance movement protein</fullName>
    </recommendedName>
    <alternativeName>
        <fullName>ORF3 protein</fullName>
    </alternativeName>
</protein>
<feature type="chain" id="PRO_0000409934" description="Long-distance movement protein">
    <location>
        <begin position="1"/>
        <end position="251"/>
    </location>
</feature>
<feature type="region of interest" description="Disordered" evidence="2">
    <location>
        <begin position="25"/>
        <end position="134"/>
    </location>
</feature>
<feature type="short sequence motif" description="Nuclear localization signal" evidence="1">
    <location>
        <begin position="108"/>
        <end position="122"/>
    </location>
</feature>
<feature type="short sequence motif" description="Nuclear export signal" evidence="1">
    <location>
        <begin position="149"/>
        <end position="153"/>
    </location>
</feature>
<feature type="mutagenesis site" description="Complete loss of nuclear localization." evidence="4">
    <original>RPRRRAGRSGGMDPR</original>
    <variation>APAAAAGASGGMDPA</variation>
    <location>
        <begin position="108"/>
        <end position="122"/>
    </location>
</feature>
<feature type="mutagenesis site" description="Complete loss of nucleolar localization and nuclear export." evidence="4 5">
    <original>L</original>
    <variation>A</variation>
    <location>
        <position position="149"/>
    </location>
</feature>
<feature type="mutagenesis site" description="Increases nucleoplasmic accumulation." evidence="4">
    <original>L</original>
    <variation>A</variation>
    <location>
        <position position="152"/>
    </location>
</feature>
<feature type="mutagenesis site" description="Increases nucleoplasmic accumulation." evidence="4">
    <original>L</original>
    <variation>A</variation>
    <location>
        <position position="153"/>
    </location>
</feature>
<keyword id="KW-1035">Host cytoplasm</keyword>
<keyword id="KW-1048">Host nucleus</keyword>
<keyword id="KW-0945">Host-virus interaction</keyword>
<keyword id="KW-1185">Reference proteome</keyword>
<keyword id="KW-0687">Ribonucleoprotein</keyword>
<keyword id="KW-0694">RNA-binding</keyword>
<keyword id="KW-0813">Transport</keyword>
<keyword id="KW-0916">Viral movement protein</keyword>
<proteinExistence type="evidence at protein level"/>
<reference key="1">
    <citation type="journal article" date="1996" name="J. Gen. Virol.">
        <title>Complete nucleotide sequence and organization of the RNA genome of groundnut rosette umbravirus.</title>
        <authorList>
            <person name="Taliansky M.E."/>
            <person name="Robinson D.J."/>
            <person name="Murant A.F."/>
        </authorList>
    </citation>
    <scope>NUCLEOTIDE SEQUENCE [GENOMIC RNA]</scope>
</reference>
<reference key="2">
    <citation type="journal article" date="2003" name="J. Virol.">
        <title>An umbraviral protein, involved in long-distance RNA movement, binds viral RNA and forms unique, protective ribonucleoprotein complexes.</title>
        <authorList>
            <person name="Taliansky M."/>
            <person name="Roberts I.M."/>
            <person name="Kalinina N."/>
            <person name="Ryabov E.V."/>
            <person name="Raj S.K."/>
            <person name="Robinson D.J."/>
            <person name="Oparka K.J."/>
        </authorList>
    </citation>
    <scope>FUNCTION</scope>
    <scope>SUBUNIT</scope>
    <scope>SUBCELLULAR LOCATION</scope>
    <scope>RNA-BINDING</scope>
</reference>
<reference key="3">
    <citation type="journal article" date="2007" name="EMBO J.">
        <title>Cajal bodies and the nucleolus are required for a plant virus systemic infection.</title>
        <authorList>
            <person name="Kim S.H."/>
            <person name="Ryabov E.V."/>
            <person name="Kalinina N.O."/>
            <person name="Rakitina D.V."/>
            <person name="Gillespie T."/>
            <person name="MacFarlane S."/>
            <person name="Haupt S."/>
            <person name="Brown J.W."/>
            <person name="Taliansky M."/>
        </authorList>
    </citation>
    <scope>SUBCELLULAR LOCATION</scope>
    <scope>NUCLEAR LOCALIZATION SIGNAL</scope>
    <scope>MUTAGENESIS OF 108-ARG--ARG-122; LEU-149; LEU-152 AND LEU-153</scope>
</reference>
<reference key="4">
    <citation type="journal article" date="2007" name="Proc. Natl. Acad. Sci. U.S.A.">
        <title>Interaction of a plant virus-encoded protein with the major nucleolar protein fibrillarin is required for systemic virus infection.</title>
        <authorList>
            <person name="Kim S.H."/>
            <person name="Macfarlane S."/>
            <person name="Kalinina N.O."/>
            <person name="Rakitina D.V."/>
            <person name="Ryabov E.V."/>
            <person name="Gillespie T."/>
            <person name="Haupt S."/>
            <person name="Brown J.W."/>
            <person name="Taliansky M."/>
        </authorList>
    </citation>
    <scope>FUNCTION</scope>
    <scope>SUBCELLULAR LOCATION</scope>
    <scope>INTERACTION WITH ARABIDOPSIS THALIANA FIB2</scope>
    <scope>MUTAGENESIS OF LEU-149</scope>
</reference>
<gene>
    <name type="primary">ORF3</name>
</gene>
<organismHost>
    <name type="scientific">Clitoria</name>
    <dbReference type="NCBI Taxonomy" id="43365"/>
</organismHost>
<organismHost>
    <name type="scientific">Lablab purpureus</name>
    <name type="common">Hyacinth bean</name>
    <name type="synonym">Dolichos lablab</name>
    <dbReference type="NCBI Taxonomy" id="35936"/>
</organismHost>
<organismHost>
    <name type="scientific">Medicago sativa</name>
    <name type="common">Alfalfa</name>
    <dbReference type="NCBI Taxonomy" id="3879"/>
</organismHost>
<organismHost>
    <name type="scientific">Phaseolus vulgaris</name>
    <name type="common">Kidney bean</name>
    <name type="synonym">French bean</name>
    <dbReference type="NCBI Taxonomy" id="3885"/>
</organismHost>
<organismHost>
    <name type="scientific">Vigna unguiculata</name>
    <name type="common">Cowpea</name>
    <dbReference type="NCBI Taxonomy" id="3917"/>
</organismHost>
<organism>
    <name type="scientific">Groundnut rosette virus (strain MC1)</name>
    <name type="common">GRV</name>
    <dbReference type="NCBI Taxonomy" id="1005060"/>
    <lineage>
        <taxon>Viruses</taxon>
        <taxon>Riboviria</taxon>
        <taxon>Orthornavirae</taxon>
        <taxon>Kitrinoviricota</taxon>
        <taxon>Tolucaviricetes</taxon>
        <taxon>Tolivirales</taxon>
        <taxon>Tombusviridae</taxon>
        <taxon>Calvusvirinae</taxon>
        <taxon>Umbravirus</taxon>
        <taxon>Umbravirus arachidis</taxon>
    </lineage>
</organism>